<proteinExistence type="inferred from homology"/>
<sequence length="290" mass="32457">MAYLGDPKQTIEVLNRYRFIFQKKFGQNFLIDTHVLEKIIRSAEITKDDLVLEIGPGIGTMTQYLCENAREVVAVEIDKNLIPILEQDTLSSYDNVTIINEDILKVDINQIVKEKNGGKPIKVVANLPYYITTPIIMGLFEAHVPIDNITVMVQKEVADRMQSGPGSKDYGALSLAVQYYADPYIVANVPPNCFMPRPNVGSAVIRLTLHQDAPVKVKNENLLFKLIRASFNQRRKTLANGLNNSPEISLPKEMISEAIEELGVVATIRGEALTLEQFAKLADIIDEKMK</sequence>
<reference key="1">
    <citation type="submission" date="2007-11" db="EMBL/GenBank/DDBJ databases">
        <title>Complete genome sequence of Clostridium phytofermentans ISDg.</title>
        <authorList>
            <person name="Leschine S.B."/>
            <person name="Warnick T.A."/>
            <person name="Blanchard J.L."/>
            <person name="Schnell D.J."/>
            <person name="Petit E.L."/>
            <person name="LaTouf W.G."/>
            <person name="Copeland A."/>
            <person name="Lucas S."/>
            <person name="Lapidus A."/>
            <person name="Barry K."/>
            <person name="Glavina del Rio T."/>
            <person name="Dalin E."/>
            <person name="Tice H."/>
            <person name="Pitluck S."/>
            <person name="Kiss H."/>
            <person name="Brettin T."/>
            <person name="Bruce D."/>
            <person name="Detter J.C."/>
            <person name="Han C."/>
            <person name="Kuske C."/>
            <person name="Schmutz J."/>
            <person name="Larimer F."/>
            <person name="Land M."/>
            <person name="Hauser L."/>
            <person name="Kyrpides N."/>
            <person name="Kim E.A."/>
            <person name="Richardson P."/>
        </authorList>
    </citation>
    <scope>NUCLEOTIDE SEQUENCE [LARGE SCALE GENOMIC DNA]</scope>
    <source>
        <strain>ATCC 700394 / DSM 18823 / ISDg</strain>
    </source>
</reference>
<keyword id="KW-0963">Cytoplasm</keyword>
<keyword id="KW-0489">Methyltransferase</keyword>
<keyword id="KW-1185">Reference proteome</keyword>
<keyword id="KW-0694">RNA-binding</keyword>
<keyword id="KW-0698">rRNA processing</keyword>
<keyword id="KW-0949">S-adenosyl-L-methionine</keyword>
<keyword id="KW-0808">Transferase</keyword>
<name>RSMA_LACP7</name>
<comment type="function">
    <text evidence="1">Specifically dimethylates two adjacent adenosines (A1518 and A1519) in the loop of a conserved hairpin near the 3'-end of 16S rRNA in the 30S particle. May play a critical role in biogenesis of 30S subunits.</text>
</comment>
<comment type="catalytic activity">
    <reaction evidence="1">
        <text>adenosine(1518)/adenosine(1519) in 16S rRNA + 4 S-adenosyl-L-methionine = N(6)-dimethyladenosine(1518)/N(6)-dimethyladenosine(1519) in 16S rRNA + 4 S-adenosyl-L-homocysteine + 4 H(+)</text>
        <dbReference type="Rhea" id="RHEA:19609"/>
        <dbReference type="Rhea" id="RHEA-COMP:10232"/>
        <dbReference type="Rhea" id="RHEA-COMP:10233"/>
        <dbReference type="ChEBI" id="CHEBI:15378"/>
        <dbReference type="ChEBI" id="CHEBI:57856"/>
        <dbReference type="ChEBI" id="CHEBI:59789"/>
        <dbReference type="ChEBI" id="CHEBI:74411"/>
        <dbReference type="ChEBI" id="CHEBI:74493"/>
        <dbReference type="EC" id="2.1.1.182"/>
    </reaction>
</comment>
<comment type="subcellular location">
    <subcellularLocation>
        <location evidence="1">Cytoplasm</location>
    </subcellularLocation>
</comment>
<comment type="similarity">
    <text evidence="1">Belongs to the class I-like SAM-binding methyltransferase superfamily. rRNA adenine N(6)-methyltransferase family. RsmA subfamily.</text>
</comment>
<dbReference type="EC" id="2.1.1.182" evidence="1"/>
<dbReference type="EMBL" id="CP000885">
    <property type="protein sequence ID" value="ABX44246.1"/>
    <property type="molecule type" value="Genomic_DNA"/>
</dbReference>
<dbReference type="RefSeq" id="WP_012201893.1">
    <property type="nucleotide sequence ID" value="NC_010001.1"/>
</dbReference>
<dbReference type="SMR" id="A9KL97"/>
<dbReference type="STRING" id="357809.Cphy_3899"/>
<dbReference type="KEGG" id="cpy:Cphy_3899"/>
<dbReference type="eggNOG" id="COG0030">
    <property type="taxonomic scope" value="Bacteria"/>
</dbReference>
<dbReference type="HOGENOM" id="CLU_041220_0_0_9"/>
<dbReference type="OrthoDB" id="9814755at2"/>
<dbReference type="Proteomes" id="UP000000370">
    <property type="component" value="Chromosome"/>
</dbReference>
<dbReference type="GO" id="GO:0005829">
    <property type="term" value="C:cytosol"/>
    <property type="evidence" value="ECO:0007669"/>
    <property type="project" value="TreeGrafter"/>
</dbReference>
<dbReference type="GO" id="GO:0052908">
    <property type="term" value="F:16S rRNA (adenine(1518)-N(6)/adenine(1519)-N(6))-dimethyltransferase activity"/>
    <property type="evidence" value="ECO:0007669"/>
    <property type="project" value="UniProtKB-EC"/>
</dbReference>
<dbReference type="GO" id="GO:0003723">
    <property type="term" value="F:RNA binding"/>
    <property type="evidence" value="ECO:0007669"/>
    <property type="project" value="UniProtKB-KW"/>
</dbReference>
<dbReference type="CDD" id="cd02440">
    <property type="entry name" value="AdoMet_MTases"/>
    <property type="match status" value="1"/>
</dbReference>
<dbReference type="FunFam" id="3.40.50.150:FF:000023">
    <property type="entry name" value="Ribosomal RNA small subunit methyltransferase A"/>
    <property type="match status" value="1"/>
</dbReference>
<dbReference type="Gene3D" id="1.10.8.100">
    <property type="entry name" value="Ribosomal RNA adenine dimethylase-like, domain 2"/>
    <property type="match status" value="1"/>
</dbReference>
<dbReference type="Gene3D" id="3.40.50.150">
    <property type="entry name" value="Vaccinia Virus protein VP39"/>
    <property type="match status" value="1"/>
</dbReference>
<dbReference type="HAMAP" id="MF_00607">
    <property type="entry name" value="16SrRNA_methyltr_A"/>
    <property type="match status" value="1"/>
</dbReference>
<dbReference type="InterPro" id="IPR001737">
    <property type="entry name" value="KsgA/Erm"/>
</dbReference>
<dbReference type="InterPro" id="IPR023165">
    <property type="entry name" value="rRNA_Ade_diMease-like_C"/>
</dbReference>
<dbReference type="InterPro" id="IPR020596">
    <property type="entry name" value="rRNA_Ade_Mease_Trfase_CS"/>
</dbReference>
<dbReference type="InterPro" id="IPR020598">
    <property type="entry name" value="rRNA_Ade_methylase_Trfase_N"/>
</dbReference>
<dbReference type="InterPro" id="IPR011530">
    <property type="entry name" value="rRNA_adenine_dimethylase"/>
</dbReference>
<dbReference type="InterPro" id="IPR029063">
    <property type="entry name" value="SAM-dependent_MTases_sf"/>
</dbReference>
<dbReference type="NCBIfam" id="TIGR00755">
    <property type="entry name" value="ksgA"/>
    <property type="match status" value="1"/>
</dbReference>
<dbReference type="PANTHER" id="PTHR11727">
    <property type="entry name" value="DIMETHYLADENOSINE TRANSFERASE"/>
    <property type="match status" value="1"/>
</dbReference>
<dbReference type="PANTHER" id="PTHR11727:SF7">
    <property type="entry name" value="DIMETHYLADENOSINE TRANSFERASE-RELATED"/>
    <property type="match status" value="1"/>
</dbReference>
<dbReference type="Pfam" id="PF00398">
    <property type="entry name" value="RrnaAD"/>
    <property type="match status" value="1"/>
</dbReference>
<dbReference type="SMART" id="SM00650">
    <property type="entry name" value="rADc"/>
    <property type="match status" value="1"/>
</dbReference>
<dbReference type="SUPFAM" id="SSF53335">
    <property type="entry name" value="S-adenosyl-L-methionine-dependent methyltransferases"/>
    <property type="match status" value="1"/>
</dbReference>
<dbReference type="PROSITE" id="PS01131">
    <property type="entry name" value="RRNA_A_DIMETH"/>
    <property type="match status" value="1"/>
</dbReference>
<dbReference type="PROSITE" id="PS51689">
    <property type="entry name" value="SAM_RNA_A_N6_MT"/>
    <property type="match status" value="1"/>
</dbReference>
<feature type="chain" id="PRO_1000082548" description="Ribosomal RNA small subunit methyltransferase A">
    <location>
        <begin position="1"/>
        <end position="290"/>
    </location>
</feature>
<feature type="binding site" evidence="1">
    <location>
        <position position="28"/>
    </location>
    <ligand>
        <name>S-adenosyl-L-methionine</name>
        <dbReference type="ChEBI" id="CHEBI:59789"/>
    </ligand>
</feature>
<feature type="binding site" evidence="1">
    <location>
        <position position="30"/>
    </location>
    <ligand>
        <name>S-adenosyl-L-methionine</name>
        <dbReference type="ChEBI" id="CHEBI:59789"/>
    </ligand>
</feature>
<feature type="binding site" evidence="1">
    <location>
        <position position="55"/>
    </location>
    <ligand>
        <name>S-adenosyl-L-methionine</name>
        <dbReference type="ChEBI" id="CHEBI:59789"/>
    </ligand>
</feature>
<feature type="binding site" evidence="1">
    <location>
        <position position="76"/>
    </location>
    <ligand>
        <name>S-adenosyl-L-methionine</name>
        <dbReference type="ChEBI" id="CHEBI:59789"/>
    </ligand>
</feature>
<feature type="binding site" evidence="1">
    <location>
        <position position="102"/>
    </location>
    <ligand>
        <name>S-adenosyl-L-methionine</name>
        <dbReference type="ChEBI" id="CHEBI:59789"/>
    </ligand>
</feature>
<feature type="binding site" evidence="1">
    <location>
        <position position="126"/>
    </location>
    <ligand>
        <name>S-adenosyl-L-methionine</name>
        <dbReference type="ChEBI" id="CHEBI:59789"/>
    </ligand>
</feature>
<accession>A9KL97</accession>
<protein>
    <recommendedName>
        <fullName evidence="1">Ribosomal RNA small subunit methyltransferase A</fullName>
        <ecNumber evidence="1">2.1.1.182</ecNumber>
    </recommendedName>
    <alternativeName>
        <fullName evidence="1">16S rRNA (adenine(1518)-N(6)/adenine(1519)-N(6))-dimethyltransferase</fullName>
    </alternativeName>
    <alternativeName>
        <fullName evidence="1">16S rRNA dimethyladenosine transferase</fullName>
    </alternativeName>
    <alternativeName>
        <fullName evidence="1">16S rRNA dimethylase</fullName>
    </alternativeName>
    <alternativeName>
        <fullName evidence="1">S-adenosylmethionine-6-N', N'-adenosyl(rRNA) dimethyltransferase</fullName>
    </alternativeName>
</protein>
<gene>
    <name evidence="1" type="primary">rsmA</name>
    <name evidence="1" type="synonym">ksgA</name>
    <name type="ordered locus">Cphy_3899</name>
</gene>
<evidence type="ECO:0000255" key="1">
    <source>
        <dbReference type="HAMAP-Rule" id="MF_00607"/>
    </source>
</evidence>
<organism>
    <name type="scientific">Lachnoclostridium phytofermentans (strain ATCC 700394 / DSM 18823 / ISDg)</name>
    <name type="common">Clostridium phytofermentans</name>
    <dbReference type="NCBI Taxonomy" id="357809"/>
    <lineage>
        <taxon>Bacteria</taxon>
        <taxon>Bacillati</taxon>
        <taxon>Bacillota</taxon>
        <taxon>Clostridia</taxon>
        <taxon>Lachnospirales</taxon>
        <taxon>Lachnospiraceae</taxon>
    </lineage>
</organism>